<comment type="function">
    <text evidence="4 5 6">Phospholipid scramblase that transports phosphatidylserine (PS) and phosphatidylethalonamine (PE) bidirectionally from one leaflet to the other of the phospholipid bilayer to at least partially collapse the membrane asymmetry established by NEO1 and other flippases (PubMed:27811238, PubMed:28057802, PubMed:30824614). The PS scramblase activity has been disputed (PubMed:30824614). Functions in the trafficking pathway from endosomes to the trans-Golgi network (TGN) (PubMed:28057802).</text>
</comment>
<comment type="subunit">
    <text evidence="6 7">Interacts with NEO1.</text>
</comment>
<comment type="subcellular location">
    <subcellularLocation>
        <location evidence="4 5">Golgi apparatus membrane</location>
        <topology evidence="4">Multi-pass membrane protein</topology>
    </subcellularLocation>
    <subcellularLocation>
        <location evidence="4 5">Late endosome membrane</location>
        <topology evidence="4">Multi-pass membrane protein</topology>
    </subcellularLocation>
</comment>
<comment type="disruption phenotype">
    <text evidence="4 5 6">Mildly sensitive to duramycin (phosphatidylethanolamine-binding cytotoxin) (PubMed:30824614). Suppresses the growth defects caused by mutations of flippases including NEO1, DRS2, DNF1, DNF2 and DNF3, as well as of the DRS2 regulator CDC50, the DNF1 and DNF2 regulator LEM3, and NEO1 interactors MON2 and DOP1 (PubMed:27811238, PubMed:28057802, PubMed:30824614).</text>
</comment>
<comment type="miscellaneous">
    <text evidence="3">Present with 937 molecules/cell in log phase SD medium.</text>
</comment>
<name>ANY1_YEAST</name>
<dbReference type="EMBL" id="Z48613">
    <property type="protein sequence ID" value="CAA88526.1"/>
    <property type="molecule type" value="Genomic_DNA"/>
</dbReference>
<dbReference type="EMBL" id="AY558117">
    <property type="protein sequence ID" value="AAS56443.1"/>
    <property type="molecule type" value="Genomic_DNA"/>
</dbReference>
<dbReference type="EMBL" id="BK006946">
    <property type="protein sequence ID" value="DAA09908.1"/>
    <property type="molecule type" value="Genomic_DNA"/>
</dbReference>
<dbReference type="PIR" id="S53040">
    <property type="entry name" value="S53040"/>
</dbReference>
<dbReference type="RefSeq" id="NP_013723.1">
    <property type="nucleotide sequence ID" value="NM_001182506.1"/>
</dbReference>
<dbReference type="BioGRID" id="35179">
    <property type="interactions" value="140"/>
</dbReference>
<dbReference type="DIP" id="DIP-4512N"/>
<dbReference type="FunCoup" id="Q03687">
    <property type="interactions" value="61"/>
</dbReference>
<dbReference type="IntAct" id="Q03687">
    <property type="interactions" value="30"/>
</dbReference>
<dbReference type="MINT" id="Q03687"/>
<dbReference type="STRING" id="4932.YMR010W"/>
<dbReference type="TCDB" id="2.A.43.2.13">
    <property type="family name" value="the lysosomal cystine transporter (lct) family"/>
</dbReference>
<dbReference type="iPTMnet" id="Q03687"/>
<dbReference type="PaxDb" id="4932-YMR010W"/>
<dbReference type="PeptideAtlas" id="Q03687"/>
<dbReference type="EnsemblFungi" id="YMR010W_mRNA">
    <property type="protein sequence ID" value="YMR010W"/>
    <property type="gene ID" value="YMR010W"/>
</dbReference>
<dbReference type="GeneID" id="855022"/>
<dbReference type="KEGG" id="sce:YMR010W"/>
<dbReference type="AGR" id="SGD:S000004612"/>
<dbReference type="SGD" id="S000004612">
    <property type="gene designation" value="ANY1"/>
</dbReference>
<dbReference type="VEuPathDB" id="FungiDB:YMR010W"/>
<dbReference type="eggNOG" id="KOG2913">
    <property type="taxonomic scope" value="Eukaryota"/>
</dbReference>
<dbReference type="GeneTree" id="ENSGT00390000002381"/>
<dbReference type="HOGENOM" id="CLU_049047_1_1_1"/>
<dbReference type="InParanoid" id="Q03687"/>
<dbReference type="OMA" id="QMSLDIY"/>
<dbReference type="OrthoDB" id="292213at2759"/>
<dbReference type="BioCyc" id="YEAST:G3O-32718-MONOMER"/>
<dbReference type="BioGRID-ORCS" id="855022">
    <property type="hits" value="0 hits in 10 CRISPR screens"/>
</dbReference>
<dbReference type="PRO" id="PR:Q03687"/>
<dbReference type="Proteomes" id="UP000002311">
    <property type="component" value="Chromosome XIII"/>
</dbReference>
<dbReference type="RNAct" id="Q03687">
    <property type="molecule type" value="protein"/>
</dbReference>
<dbReference type="GO" id="GO:0005737">
    <property type="term" value="C:cytoplasm"/>
    <property type="evidence" value="ECO:0007005"/>
    <property type="project" value="SGD"/>
</dbReference>
<dbReference type="GO" id="GO:0005829">
    <property type="term" value="C:cytosol"/>
    <property type="evidence" value="ECO:0007669"/>
    <property type="project" value="GOC"/>
</dbReference>
<dbReference type="GO" id="GO:0005783">
    <property type="term" value="C:endoplasmic reticulum"/>
    <property type="evidence" value="ECO:0007005"/>
    <property type="project" value="SGD"/>
</dbReference>
<dbReference type="GO" id="GO:0005768">
    <property type="term" value="C:endosome"/>
    <property type="evidence" value="ECO:0000318"/>
    <property type="project" value="GO_Central"/>
</dbReference>
<dbReference type="GO" id="GO:0010008">
    <property type="term" value="C:endosome membrane"/>
    <property type="evidence" value="ECO:0000314"/>
    <property type="project" value="SGD"/>
</dbReference>
<dbReference type="GO" id="GO:0000139">
    <property type="term" value="C:Golgi membrane"/>
    <property type="evidence" value="ECO:0007669"/>
    <property type="project" value="UniProtKB-SubCell"/>
</dbReference>
<dbReference type="GO" id="GO:0031902">
    <property type="term" value="C:late endosome membrane"/>
    <property type="evidence" value="ECO:0007669"/>
    <property type="project" value="UniProtKB-SubCell"/>
</dbReference>
<dbReference type="GO" id="GO:0005802">
    <property type="term" value="C:trans-Golgi network"/>
    <property type="evidence" value="ECO:0000318"/>
    <property type="project" value="GO_Central"/>
</dbReference>
<dbReference type="GO" id="GO:0032588">
    <property type="term" value="C:trans-Golgi network membrane"/>
    <property type="evidence" value="ECO:0000314"/>
    <property type="project" value="SGD"/>
</dbReference>
<dbReference type="GO" id="GO:0045332">
    <property type="term" value="P:phospholipid translocation"/>
    <property type="evidence" value="ECO:0000315"/>
    <property type="project" value="SGD"/>
</dbReference>
<dbReference type="GO" id="GO:0042147">
    <property type="term" value="P:retrograde transport, endosome to Golgi"/>
    <property type="evidence" value="ECO:0000316"/>
    <property type="project" value="SGD"/>
</dbReference>
<dbReference type="FunFam" id="1.20.1280.290:FF:000005">
    <property type="entry name" value="PQ-loop repeat-containing protein 1"/>
    <property type="match status" value="1"/>
</dbReference>
<dbReference type="Gene3D" id="1.20.1280.290">
    <property type="match status" value="1"/>
</dbReference>
<dbReference type="InterPro" id="IPR006603">
    <property type="entry name" value="PQ-loop_rpt"/>
</dbReference>
<dbReference type="InterPro" id="IPR052241">
    <property type="entry name" value="SLC66/Scramblase_ANY1"/>
</dbReference>
<dbReference type="PANTHER" id="PTHR14856:SF9">
    <property type="entry name" value="PQ-LOOP REPEAT-CONTAINING PROTEIN 1"/>
    <property type="match status" value="1"/>
</dbReference>
<dbReference type="PANTHER" id="PTHR14856">
    <property type="entry name" value="PQ-LOOP REPEAT-CONTAINING PROTEIN 1-LIKE PROTEIN"/>
    <property type="match status" value="1"/>
</dbReference>
<dbReference type="Pfam" id="PF04193">
    <property type="entry name" value="PQ-loop"/>
    <property type="match status" value="1"/>
</dbReference>
<proteinExistence type="evidence at protein level"/>
<feature type="chain" id="PRO_0000203270" description="Scramblase ANY1">
    <location>
        <begin position="1"/>
        <end position="405"/>
    </location>
</feature>
<feature type="topological domain" description="Cytoplasmic" evidence="10">
    <location>
        <begin position="1"/>
        <end position="51"/>
    </location>
</feature>
<feature type="transmembrane region" description="Helical" evidence="1">
    <location>
        <begin position="52"/>
        <end position="72"/>
    </location>
</feature>
<feature type="topological domain" description="Lumenal" evidence="10">
    <location>
        <begin position="73"/>
        <end position="76"/>
    </location>
</feature>
<feature type="transmembrane region" description="Helical" evidence="1">
    <location>
        <begin position="77"/>
        <end position="97"/>
    </location>
</feature>
<feature type="topological domain" description="Cytoplasmic" evidence="10">
    <location>
        <begin position="98"/>
        <end position="103"/>
    </location>
</feature>
<feature type="transmembrane region" description="Helical" evidence="1">
    <location>
        <begin position="104"/>
        <end position="124"/>
    </location>
</feature>
<feature type="topological domain" description="Lumenal" evidence="10">
    <location>
        <begin position="125"/>
        <end position="177"/>
    </location>
</feature>
<feature type="transmembrane region" description="Helical" evidence="1">
    <location>
        <begin position="178"/>
        <end position="198"/>
    </location>
</feature>
<feature type="topological domain" description="Cytoplasmic" evidence="10">
    <location>
        <begin position="199"/>
        <end position="223"/>
    </location>
</feature>
<feature type="transmembrane region" description="Helical" evidence="1">
    <location>
        <begin position="224"/>
        <end position="244"/>
    </location>
</feature>
<feature type="topological domain" description="Lumenal" evidence="10">
    <location>
        <begin position="245"/>
        <end position="254"/>
    </location>
</feature>
<feature type="transmembrane region" description="Helical" evidence="1">
    <location>
        <begin position="255"/>
        <end position="275"/>
    </location>
</feature>
<feature type="topological domain" description="Cytoplasmic" evidence="10">
    <location>
        <begin position="276"/>
        <end position="283"/>
    </location>
</feature>
<feature type="transmembrane region" description="Helical" evidence="1">
    <location>
        <begin position="284"/>
        <end position="306"/>
    </location>
</feature>
<feature type="topological domain" description="Lumenal" evidence="10">
    <location>
        <begin position="307"/>
        <end position="312"/>
    </location>
</feature>
<feature type="transmembrane region" description="Helical" evidence="1">
    <location>
        <begin position="313"/>
        <end position="335"/>
    </location>
</feature>
<feature type="topological domain" description="Cytoplasmic" evidence="10">
    <location>
        <begin position="336"/>
        <end position="405"/>
    </location>
</feature>
<feature type="domain" description="PQ-loop" evidence="1">
    <location>
        <begin position="252"/>
        <end position="309"/>
    </location>
</feature>
<feature type="region of interest" description="Disordered" evidence="2">
    <location>
        <begin position="379"/>
        <end position="405"/>
    </location>
</feature>
<feature type="compositionally biased region" description="Polar residues" evidence="2">
    <location>
        <begin position="396"/>
        <end position="405"/>
    </location>
</feature>
<feature type="mutagenesis site" description="Suppresses the growth defects caused by mutations of flippases." evidence="4">
    <original>G</original>
    <variation>R</variation>
    <location>
        <position position="80"/>
    </location>
</feature>
<feature type="mutagenesis site" description="Abolishes its physical interaction with NEO1. Suppresses the growth defects caused by mutations of flippases." evidence="4 6">
    <original>D</original>
    <variation>G</variation>
    <location>
        <position position="84"/>
    </location>
</feature>
<feature type="mutagenesis site" description="Suppresses the growth defects caused by mutations of flippases." evidence="4">
    <location>
        <begin position="258"/>
        <end position="405"/>
    </location>
</feature>
<protein>
    <recommendedName>
        <fullName evidence="8">Scramblase ANY1</fullName>
    </recommendedName>
    <alternativeName>
        <fullName evidence="8">Antagonizes NEO1 phospholipid flippase protein 1</fullName>
    </alternativeName>
    <alternativeName>
        <fullName evidence="9">CDC50 suppressor 1</fullName>
    </alternativeName>
</protein>
<gene>
    <name evidence="8" type="primary">ANY1</name>
    <name evidence="9" type="synonym">CFS1</name>
    <name type="ordered locus">YMR010W</name>
    <name type="ORF">YM8270.13</name>
</gene>
<sequence length="405" mass="46872">MSTTGPLDATLIRDVAVATATKASYDMSDTLYSYLPKVDQFYIPEWLTMQFIANNLISFTPLFSYGTTIISIEKCKTALGFSIDICATMLIASILRISYYLITPYEITLLRQSLVMIFIQLILLRTSLKYRPDEYKYQNLTDVESLSHLIHDIWFEFFSCINRPKFLSEDWKNLIKSLSFTNLLKFSFKIFLAFFYKILKFFDPNFKRIGAFWQWDDDKNFWRFLALFATVQILVTFFISNILNWDSLAQGLGSIIGSLGLLVESLLPLPQIAILYKLKSVQGFKLILLVSWLCGDTLKITYLIFGAKNISALFVIFALFQMSLDFYIGGQYIYYRYYYPKLRHQHHPNDSNSPSDEDESEMYELDLFNTLQKDVEKALKQDSNDTSDSPQDDQVGKSQAQAVTL</sequence>
<accession>Q03687</accession>
<accession>D6VZI4</accession>
<keyword id="KW-0967">Endosome</keyword>
<keyword id="KW-0333">Golgi apparatus</keyword>
<keyword id="KW-0445">Lipid transport</keyword>
<keyword id="KW-0472">Membrane</keyword>
<keyword id="KW-1185">Reference proteome</keyword>
<keyword id="KW-0812">Transmembrane</keyword>
<keyword id="KW-1133">Transmembrane helix</keyword>
<keyword id="KW-0813">Transport</keyword>
<organism>
    <name type="scientific">Saccharomyces cerevisiae (strain ATCC 204508 / S288c)</name>
    <name type="common">Baker's yeast</name>
    <dbReference type="NCBI Taxonomy" id="559292"/>
    <lineage>
        <taxon>Eukaryota</taxon>
        <taxon>Fungi</taxon>
        <taxon>Dikarya</taxon>
        <taxon>Ascomycota</taxon>
        <taxon>Saccharomycotina</taxon>
        <taxon>Saccharomycetes</taxon>
        <taxon>Saccharomycetales</taxon>
        <taxon>Saccharomycetaceae</taxon>
        <taxon>Saccharomyces</taxon>
    </lineage>
</organism>
<evidence type="ECO:0000255" key="1"/>
<evidence type="ECO:0000256" key="2">
    <source>
        <dbReference type="SAM" id="MobiDB-lite"/>
    </source>
</evidence>
<evidence type="ECO:0000269" key="3">
    <source>
    </source>
</evidence>
<evidence type="ECO:0000269" key="4">
    <source>
    </source>
</evidence>
<evidence type="ECO:0000269" key="5">
    <source>
    </source>
</evidence>
<evidence type="ECO:0000269" key="6">
    <source>
    </source>
</evidence>
<evidence type="ECO:0000269" key="7">
    <source>
    </source>
</evidence>
<evidence type="ECO:0000303" key="8">
    <source>
    </source>
</evidence>
<evidence type="ECO:0000303" key="9">
    <source>
    </source>
</evidence>
<evidence type="ECO:0000305" key="10">
    <source>
    </source>
</evidence>
<reference key="1">
    <citation type="journal article" date="1997" name="Nature">
        <title>The nucleotide sequence of Saccharomyces cerevisiae chromosome XIII.</title>
        <authorList>
            <person name="Bowman S."/>
            <person name="Churcher C.M."/>
            <person name="Badcock K."/>
            <person name="Brown D."/>
            <person name="Chillingworth T."/>
            <person name="Connor R."/>
            <person name="Dedman K."/>
            <person name="Devlin K."/>
            <person name="Gentles S."/>
            <person name="Hamlin N."/>
            <person name="Hunt S."/>
            <person name="Jagels K."/>
            <person name="Lye G."/>
            <person name="Moule S."/>
            <person name="Odell C."/>
            <person name="Pearson D."/>
            <person name="Rajandream M.A."/>
            <person name="Rice P."/>
            <person name="Skelton J."/>
            <person name="Walsh S.V."/>
            <person name="Whitehead S."/>
            <person name="Barrell B.G."/>
        </authorList>
    </citation>
    <scope>NUCLEOTIDE SEQUENCE [LARGE SCALE GENOMIC DNA]</scope>
    <source>
        <strain>ATCC 204508 / S288c</strain>
    </source>
</reference>
<reference key="2">
    <citation type="journal article" date="2014" name="G3 (Bethesda)">
        <title>The reference genome sequence of Saccharomyces cerevisiae: Then and now.</title>
        <authorList>
            <person name="Engel S.R."/>
            <person name="Dietrich F.S."/>
            <person name="Fisk D.G."/>
            <person name="Binkley G."/>
            <person name="Balakrishnan R."/>
            <person name="Costanzo M.C."/>
            <person name="Dwight S.S."/>
            <person name="Hitz B.C."/>
            <person name="Karra K."/>
            <person name="Nash R.S."/>
            <person name="Weng S."/>
            <person name="Wong E.D."/>
            <person name="Lloyd P."/>
            <person name="Skrzypek M.S."/>
            <person name="Miyasato S.R."/>
            <person name="Simison M."/>
            <person name="Cherry J.M."/>
        </authorList>
    </citation>
    <scope>GENOME REANNOTATION</scope>
    <source>
        <strain>ATCC 204508 / S288c</strain>
    </source>
</reference>
<reference key="3">
    <citation type="journal article" date="2007" name="Genome Res.">
        <title>Approaching a complete repository of sequence-verified protein-encoding clones for Saccharomyces cerevisiae.</title>
        <authorList>
            <person name="Hu Y."/>
            <person name="Rolfs A."/>
            <person name="Bhullar B."/>
            <person name="Murthy T.V.S."/>
            <person name="Zhu C."/>
            <person name="Berger M.F."/>
            <person name="Camargo A.A."/>
            <person name="Kelley F."/>
            <person name="McCarron S."/>
            <person name="Jepson D."/>
            <person name="Richardson A."/>
            <person name="Raphael J."/>
            <person name="Moreira D."/>
            <person name="Taycher E."/>
            <person name="Zuo D."/>
            <person name="Mohr S."/>
            <person name="Kane M.F."/>
            <person name="Williamson J."/>
            <person name="Simpson A.J.G."/>
            <person name="Bulyk M.L."/>
            <person name="Harlow E."/>
            <person name="Marsischky G."/>
            <person name="Kolodner R.D."/>
            <person name="LaBaer J."/>
        </authorList>
    </citation>
    <scope>NUCLEOTIDE SEQUENCE [GENOMIC DNA]</scope>
    <source>
        <strain>ATCC 204508 / S288c</strain>
    </source>
</reference>
<reference key="4">
    <citation type="journal article" date="2003" name="Nature">
        <title>Global analysis of protein expression in yeast.</title>
        <authorList>
            <person name="Ghaemmaghami S."/>
            <person name="Huh W.-K."/>
            <person name="Bower K."/>
            <person name="Howson R.W."/>
            <person name="Belle A."/>
            <person name="Dephoure N."/>
            <person name="O'Shea E.K."/>
            <person name="Weissman J.S."/>
        </authorList>
    </citation>
    <scope>LEVEL OF PROTEIN EXPRESSION [LARGE SCALE ANALYSIS]</scope>
</reference>
<reference key="5">
    <citation type="journal article" date="2006" name="Proc. Natl. Acad. Sci. U.S.A.">
        <title>A global topology map of the Saccharomyces cerevisiae membrane proteome.</title>
        <authorList>
            <person name="Kim H."/>
            <person name="Melen K."/>
            <person name="Oesterberg M."/>
            <person name="von Heijne G."/>
        </authorList>
    </citation>
    <scope>TOPOLOGY [LARGE SCALE ANALYSIS]</scope>
    <source>
        <strain>ATCC 208353 / W303-1A</strain>
    </source>
</reference>
<reference key="6">
    <citation type="journal article" date="2016" name="Science">
        <title>Exploring genetic suppression interactions on a global scale.</title>
        <authorList>
            <person name="van Leeuwen J."/>
            <person name="Pons C."/>
            <person name="Mellor J.C."/>
            <person name="Yamaguchi T.N."/>
            <person name="Friesen H."/>
            <person name="Koschwanez J."/>
            <person name="Usaj M.M."/>
            <person name="Pechlaner M."/>
            <person name="Takar M."/>
            <person name="Usaj M."/>
            <person name="VanderSluis B."/>
            <person name="Andrusiak K."/>
            <person name="Bansal P."/>
            <person name="Baryshnikova A."/>
            <person name="Boone C.E."/>
            <person name="Cao J."/>
            <person name="Cote A."/>
            <person name="Gebbia M."/>
            <person name="Horecka G."/>
            <person name="Horecka I."/>
            <person name="Kuzmin E."/>
            <person name="Legro N."/>
            <person name="Liang W."/>
            <person name="van Lieshout N."/>
            <person name="McNee M."/>
            <person name="San Luis B.J."/>
            <person name="Shaeri F."/>
            <person name="Shuteriqi E."/>
            <person name="Sun S."/>
            <person name="Yang L."/>
            <person name="Youn J.Y."/>
            <person name="Yuen M."/>
            <person name="Costanzo M."/>
            <person name="Gingras A.C."/>
            <person name="Aloy P."/>
            <person name="Oostenbrink C."/>
            <person name="Murray A."/>
            <person name="Graham T.R."/>
            <person name="Myers C.L."/>
            <person name="Andrews B.J."/>
            <person name="Roth F.P."/>
            <person name="Boone C."/>
        </authorList>
    </citation>
    <scope>FUNCTION</scope>
    <scope>SUBCELLULAR LOCATION</scope>
    <scope>TOPOLOGY</scope>
    <scope>DISRUPTION PHENOTYPE</scope>
    <scope>MUTAGENESIS OF GLY-80; ASP-84 AND 258-SER--LEU-405</scope>
</reference>
<reference key="7">
    <citation type="journal article" date="2017" name="G3 (Bethesda)">
        <title>Cfs1p, a Novel Membrane Protein in the PQ-Loop Family, Is Involved in Phospholipid Flippase Functions in Yeast.</title>
        <authorList>
            <person name="Yamamoto T."/>
            <person name="Fujimura-Kamada K."/>
            <person name="Shioji E."/>
            <person name="Suzuki R."/>
            <person name="Tanaka K."/>
        </authorList>
    </citation>
    <scope>FUNCTION</scope>
    <scope>SUBCELLULAR LOCATION</scope>
    <scope>DISRUPTION PHENOTYPE</scope>
</reference>
<reference key="8">
    <citation type="journal article" date="2019" name="J. Lipid Res.">
        <title>The PQ-loop protein Any1 segregates Drs2 and Neo1 functions required for viability and plasma membrane phospholipid asymmetry.</title>
        <authorList>
            <person name="Takar M."/>
            <person name="Huang Y."/>
            <person name="Graham T.R."/>
        </authorList>
    </citation>
    <scope>FUNCTION</scope>
    <scope>INTERACTION WITH NEO1</scope>
    <scope>DISRUPTION PHENOTYPE</scope>
    <scope>MUTAGENESIS OF ASP-84</scope>
</reference>
<reference key="9">
    <citation type="journal article" date="2020" name="Biochim. Biophys. Acta">
        <title>Conserved mechanism of phospholipid substrate recognition by the P4-ATPase Neo1 from Saccharomyces cerevisiae.</title>
        <authorList>
            <person name="Huang Y."/>
            <person name="Takar M."/>
            <person name="Best J.T."/>
            <person name="Graham T.R."/>
        </authorList>
    </citation>
    <scope>INTERACTION WITH NEO1</scope>
</reference>